<name>TRUB_PROM9</name>
<reference key="1">
    <citation type="journal article" date="2006" name="Science">
        <title>Genomic islands and the ecology and evolution of Prochlorococcus.</title>
        <authorList>
            <person name="Coleman M.L."/>
            <person name="Sullivan M.B."/>
            <person name="Martiny A.C."/>
            <person name="Steglich C."/>
            <person name="Barry K."/>
            <person name="Delong E.F."/>
            <person name="Chisholm S.W."/>
        </authorList>
    </citation>
    <scope>NUCLEOTIDE SEQUENCE [LARGE SCALE GENOMIC DNA]</scope>
    <source>
        <strain>MIT 9312</strain>
    </source>
</reference>
<feature type="chain" id="PRO_0000229368" description="tRNA pseudouridine synthase B">
    <location>
        <begin position="1"/>
        <end position="307"/>
    </location>
</feature>
<feature type="active site" description="Nucleophile" evidence="1">
    <location>
        <position position="41"/>
    </location>
</feature>
<organism>
    <name type="scientific">Prochlorococcus marinus (strain MIT 9312)</name>
    <dbReference type="NCBI Taxonomy" id="74546"/>
    <lineage>
        <taxon>Bacteria</taxon>
        <taxon>Bacillati</taxon>
        <taxon>Cyanobacteriota</taxon>
        <taxon>Cyanophyceae</taxon>
        <taxon>Synechococcales</taxon>
        <taxon>Prochlorococcaceae</taxon>
        <taxon>Prochlorococcus</taxon>
    </lineage>
</organism>
<comment type="function">
    <text evidence="1">Responsible for synthesis of pseudouridine from uracil-55 in the psi GC loop of transfer RNAs.</text>
</comment>
<comment type="catalytic activity">
    <reaction evidence="1">
        <text>uridine(55) in tRNA = pseudouridine(55) in tRNA</text>
        <dbReference type="Rhea" id="RHEA:42532"/>
        <dbReference type="Rhea" id="RHEA-COMP:10101"/>
        <dbReference type="Rhea" id="RHEA-COMP:10102"/>
        <dbReference type="ChEBI" id="CHEBI:65314"/>
        <dbReference type="ChEBI" id="CHEBI:65315"/>
        <dbReference type="EC" id="5.4.99.25"/>
    </reaction>
</comment>
<comment type="similarity">
    <text evidence="1">Belongs to the pseudouridine synthase TruB family. Type 1 subfamily.</text>
</comment>
<keyword id="KW-0413">Isomerase</keyword>
<keyword id="KW-0819">tRNA processing</keyword>
<sequence>MENKDGFLVINKDKGCTSHDCVKQIRKLLNTRKVGHTGTLDPEVIGTLPIAIGSATRFIQYLPQGKTYIGQIKLGIRTNTDDIHGEIINQKCWPKISDEKLDQYLNKFRGLIKQIPPKVSSVHVNGERAYKKSFNNENFELAPREVKIDELILMKWDQINGIIELKINCSAGTYIRAIARDLGEILNSEGCLLQLKRISACGFHEKNSIKISDIKKGIDQKNASNFIIPTISALNHISTLILNKEEDINFWQTGRAIKFDINYFNEGNNFDNKKPIKVVDKRKMLLGIGFLNKELTNINPKLVLNAK</sequence>
<proteinExistence type="inferred from homology"/>
<gene>
    <name evidence="1" type="primary">truB</name>
    <name type="ordered locus">PMT9312_1445</name>
</gene>
<accession>Q319E0</accession>
<evidence type="ECO:0000255" key="1">
    <source>
        <dbReference type="HAMAP-Rule" id="MF_01080"/>
    </source>
</evidence>
<dbReference type="EC" id="5.4.99.25" evidence="1"/>
<dbReference type="EMBL" id="CP000111">
    <property type="protein sequence ID" value="ABB50505.1"/>
    <property type="molecule type" value="Genomic_DNA"/>
</dbReference>
<dbReference type="RefSeq" id="WP_011376989.1">
    <property type="nucleotide sequence ID" value="NC_007577.1"/>
</dbReference>
<dbReference type="SMR" id="Q319E0"/>
<dbReference type="STRING" id="74546.PMT9312_1445"/>
<dbReference type="KEGG" id="pmi:PMT9312_1445"/>
<dbReference type="eggNOG" id="COG0130">
    <property type="taxonomic scope" value="Bacteria"/>
</dbReference>
<dbReference type="HOGENOM" id="CLU_032087_0_0_3"/>
<dbReference type="OrthoDB" id="9802309at2"/>
<dbReference type="Proteomes" id="UP000002715">
    <property type="component" value="Chromosome"/>
</dbReference>
<dbReference type="GO" id="GO:0003723">
    <property type="term" value="F:RNA binding"/>
    <property type="evidence" value="ECO:0007669"/>
    <property type="project" value="InterPro"/>
</dbReference>
<dbReference type="GO" id="GO:0160148">
    <property type="term" value="F:tRNA pseudouridine(55) synthase activity"/>
    <property type="evidence" value="ECO:0007669"/>
    <property type="project" value="UniProtKB-EC"/>
</dbReference>
<dbReference type="GO" id="GO:1990481">
    <property type="term" value="P:mRNA pseudouridine synthesis"/>
    <property type="evidence" value="ECO:0007669"/>
    <property type="project" value="TreeGrafter"/>
</dbReference>
<dbReference type="GO" id="GO:0031119">
    <property type="term" value="P:tRNA pseudouridine synthesis"/>
    <property type="evidence" value="ECO:0007669"/>
    <property type="project" value="UniProtKB-UniRule"/>
</dbReference>
<dbReference type="CDD" id="cd02573">
    <property type="entry name" value="PseudoU_synth_EcTruB"/>
    <property type="match status" value="1"/>
</dbReference>
<dbReference type="Gene3D" id="3.30.2350.10">
    <property type="entry name" value="Pseudouridine synthase"/>
    <property type="match status" value="1"/>
</dbReference>
<dbReference type="HAMAP" id="MF_01080">
    <property type="entry name" value="TruB_bact"/>
    <property type="match status" value="1"/>
</dbReference>
<dbReference type="InterPro" id="IPR020103">
    <property type="entry name" value="PsdUridine_synth_cat_dom_sf"/>
</dbReference>
<dbReference type="InterPro" id="IPR002501">
    <property type="entry name" value="PsdUridine_synth_N"/>
</dbReference>
<dbReference type="InterPro" id="IPR014780">
    <property type="entry name" value="tRNA_psdUridine_synth_TruB"/>
</dbReference>
<dbReference type="NCBIfam" id="TIGR00431">
    <property type="entry name" value="TruB"/>
    <property type="match status" value="1"/>
</dbReference>
<dbReference type="PANTHER" id="PTHR13767:SF2">
    <property type="entry name" value="PSEUDOURIDYLATE SYNTHASE TRUB1"/>
    <property type="match status" value="1"/>
</dbReference>
<dbReference type="PANTHER" id="PTHR13767">
    <property type="entry name" value="TRNA-PSEUDOURIDINE SYNTHASE"/>
    <property type="match status" value="1"/>
</dbReference>
<dbReference type="Pfam" id="PF01509">
    <property type="entry name" value="TruB_N"/>
    <property type="match status" value="1"/>
</dbReference>
<dbReference type="SUPFAM" id="SSF55120">
    <property type="entry name" value="Pseudouridine synthase"/>
    <property type="match status" value="1"/>
</dbReference>
<protein>
    <recommendedName>
        <fullName evidence="1">tRNA pseudouridine synthase B</fullName>
        <ecNumber evidence="1">5.4.99.25</ecNumber>
    </recommendedName>
    <alternativeName>
        <fullName evidence="1">tRNA pseudouridine(55) synthase</fullName>
        <shortName evidence="1">Psi55 synthase</shortName>
    </alternativeName>
    <alternativeName>
        <fullName evidence="1">tRNA pseudouridylate synthase</fullName>
    </alternativeName>
    <alternativeName>
        <fullName evidence="1">tRNA-uridine isomerase</fullName>
    </alternativeName>
</protein>